<sequence length="557" mass="59286">MLSDIEIARAATLKPITEIAGRLNIPDESVLSYGHTIAKLDGEYLNSLSSKPRGKLVLVSAITPTPAGEGKTTTTVGLGDAFNRIGKKAVICLREPSLGPCFGVKGGAAGGGYAQVVPMERINLHFTGDFHAITSAHDLLAAMIDNHVHWGNEPVMDRNSITFRRVIDMNDRMLRNMVIGLGGKANGYPREGGFDISVASEVMAILCLASDLKDLRSRLERIIIGEDNDHNPVAAAKIKAAGAMTALLKDALQPNLVQTLEGNPALIHGGPFANIAHGCNSLIATKAALHLGDIAITEAGFGADLGAEKFFDIKCRQANLEPDAVVLVATIRALKMHGGVALADLKNENIAALETGFANLARHAENLAKFGVKTVVAINRFHSDTEAELDKLQDLCASIGLDSAVCTHFTDGGAGAEDLARKLSAILDAPKEDSFRLLYPDEMPLWKKIETIAKEIYRAGEVVPQGTVLKKLKSFEEQGFGDLPVCIAKTQSSFSADPKAKNAPTGHIFPIREVRLNAGAGFIVAISGNIMTMPGLPRHPAAENIDINEDNEIIGLA</sequence>
<reference key="1">
    <citation type="journal article" date="2005" name="Nat. Biotechnol.">
        <title>The genome sequence of the ethanologenic bacterium Zymomonas mobilis ZM4.</title>
        <authorList>
            <person name="Seo J.-S."/>
            <person name="Chong H."/>
            <person name="Park H.S."/>
            <person name="Yoon K.-O."/>
            <person name="Jung C."/>
            <person name="Kim J.J."/>
            <person name="Hong J.H."/>
            <person name="Kim H."/>
            <person name="Kim J.-H."/>
            <person name="Kil J.-I."/>
            <person name="Park C.J."/>
            <person name="Oh H.-M."/>
            <person name="Lee J.-S."/>
            <person name="Jin S.-J."/>
            <person name="Um H.-W."/>
            <person name="Lee H.-J."/>
            <person name="Oh S.-J."/>
            <person name="Kim J.Y."/>
            <person name="Kang H.L."/>
            <person name="Lee S.Y."/>
            <person name="Lee K.J."/>
            <person name="Kang H.S."/>
        </authorList>
    </citation>
    <scope>NUCLEOTIDE SEQUENCE [LARGE SCALE GENOMIC DNA]</scope>
    <source>
        <strain>ATCC 31821 / ZM4 / CP4</strain>
    </source>
</reference>
<reference key="2">
    <citation type="journal article" date="2009" name="Nat. Biotechnol.">
        <title>Improved genome annotation for Zymomonas mobilis.</title>
        <authorList>
            <person name="Yang S."/>
            <person name="Pappas K.M."/>
            <person name="Hauser L.J."/>
            <person name="Land M.L."/>
            <person name="Chen G.L."/>
            <person name="Hurst G.B."/>
            <person name="Pan C."/>
            <person name="Kouvelis V.N."/>
            <person name="Typas M.A."/>
            <person name="Pelletier D.A."/>
            <person name="Klingeman D.M."/>
            <person name="Chang Y.J."/>
            <person name="Samatova N.F."/>
            <person name="Brown S.D."/>
        </authorList>
    </citation>
    <scope>SEQUENCE REVISION</scope>
</reference>
<organism>
    <name type="scientific">Zymomonas mobilis subsp. mobilis (strain ATCC 31821 / ZM4 / CP4)</name>
    <dbReference type="NCBI Taxonomy" id="264203"/>
    <lineage>
        <taxon>Bacteria</taxon>
        <taxon>Pseudomonadati</taxon>
        <taxon>Pseudomonadota</taxon>
        <taxon>Alphaproteobacteria</taxon>
        <taxon>Sphingomonadales</taxon>
        <taxon>Zymomonadaceae</taxon>
        <taxon>Zymomonas</taxon>
    </lineage>
</organism>
<evidence type="ECO:0000255" key="1">
    <source>
        <dbReference type="HAMAP-Rule" id="MF_01543"/>
    </source>
</evidence>
<accession>Q5NQC7</accession>
<comment type="catalytic activity">
    <reaction evidence="1">
        <text>(6S)-5,6,7,8-tetrahydrofolate + formate + ATP = (6R)-10-formyltetrahydrofolate + ADP + phosphate</text>
        <dbReference type="Rhea" id="RHEA:20221"/>
        <dbReference type="ChEBI" id="CHEBI:15740"/>
        <dbReference type="ChEBI" id="CHEBI:30616"/>
        <dbReference type="ChEBI" id="CHEBI:43474"/>
        <dbReference type="ChEBI" id="CHEBI:57453"/>
        <dbReference type="ChEBI" id="CHEBI:195366"/>
        <dbReference type="ChEBI" id="CHEBI:456216"/>
        <dbReference type="EC" id="6.3.4.3"/>
    </reaction>
</comment>
<comment type="pathway">
    <text evidence="1">One-carbon metabolism; tetrahydrofolate interconversion.</text>
</comment>
<comment type="similarity">
    <text evidence="1">Belongs to the formate--tetrahydrofolate ligase family.</text>
</comment>
<proteinExistence type="inferred from homology"/>
<protein>
    <recommendedName>
        <fullName evidence="1">Formate--tetrahydrofolate ligase</fullName>
        <ecNumber evidence="1">6.3.4.3</ecNumber>
    </recommendedName>
    <alternativeName>
        <fullName evidence="1">Formyltetrahydrofolate synthetase</fullName>
        <shortName evidence="1">FHS</shortName>
        <shortName evidence="1">FTHFS</shortName>
    </alternativeName>
</protein>
<feature type="chain" id="PRO_0000199412" description="Formate--tetrahydrofolate ligase">
    <location>
        <begin position="1"/>
        <end position="557"/>
    </location>
</feature>
<feature type="binding site" evidence="1">
    <location>
        <begin position="65"/>
        <end position="72"/>
    </location>
    <ligand>
        <name>ATP</name>
        <dbReference type="ChEBI" id="CHEBI:30616"/>
    </ligand>
</feature>
<keyword id="KW-0067">ATP-binding</keyword>
<keyword id="KW-0436">Ligase</keyword>
<keyword id="KW-0547">Nucleotide-binding</keyword>
<keyword id="KW-0554">One-carbon metabolism</keyword>
<keyword id="KW-1185">Reference proteome</keyword>
<dbReference type="EC" id="6.3.4.3" evidence="1"/>
<dbReference type="EMBL" id="AE008692">
    <property type="protein sequence ID" value="AAV89078.2"/>
    <property type="molecule type" value="Genomic_DNA"/>
</dbReference>
<dbReference type="RefSeq" id="WP_011240364.1">
    <property type="nucleotide sequence ID" value="NZ_CP035711.1"/>
</dbReference>
<dbReference type="SMR" id="Q5NQC7"/>
<dbReference type="STRING" id="264203.ZMO0454"/>
<dbReference type="KEGG" id="zmo:ZMO0454"/>
<dbReference type="eggNOG" id="COG2759">
    <property type="taxonomic scope" value="Bacteria"/>
</dbReference>
<dbReference type="HOGENOM" id="CLU_003601_3_3_5"/>
<dbReference type="UniPathway" id="UPA00193"/>
<dbReference type="Proteomes" id="UP000001173">
    <property type="component" value="Chromosome"/>
</dbReference>
<dbReference type="GO" id="GO:0005524">
    <property type="term" value="F:ATP binding"/>
    <property type="evidence" value="ECO:0007669"/>
    <property type="project" value="UniProtKB-UniRule"/>
</dbReference>
<dbReference type="GO" id="GO:0004329">
    <property type="term" value="F:formate-tetrahydrofolate ligase activity"/>
    <property type="evidence" value="ECO:0007669"/>
    <property type="project" value="UniProtKB-UniRule"/>
</dbReference>
<dbReference type="GO" id="GO:0035999">
    <property type="term" value="P:tetrahydrofolate interconversion"/>
    <property type="evidence" value="ECO:0007669"/>
    <property type="project" value="UniProtKB-UniRule"/>
</dbReference>
<dbReference type="CDD" id="cd00477">
    <property type="entry name" value="FTHFS"/>
    <property type="match status" value="1"/>
</dbReference>
<dbReference type="FunFam" id="3.30.1510.10:FF:000001">
    <property type="entry name" value="Formate--tetrahydrofolate ligase"/>
    <property type="match status" value="1"/>
</dbReference>
<dbReference type="FunFam" id="3.10.410.10:FF:000001">
    <property type="entry name" value="Putative formate--tetrahydrofolate ligase"/>
    <property type="match status" value="1"/>
</dbReference>
<dbReference type="Gene3D" id="3.30.1510.10">
    <property type="entry name" value="Domain 2, N(10)-formyltetrahydrofolate synthetase"/>
    <property type="match status" value="1"/>
</dbReference>
<dbReference type="Gene3D" id="3.10.410.10">
    <property type="entry name" value="Formyltetrahydrofolate synthetase, domain 3"/>
    <property type="match status" value="1"/>
</dbReference>
<dbReference type="Gene3D" id="3.40.50.300">
    <property type="entry name" value="P-loop containing nucleotide triphosphate hydrolases"/>
    <property type="match status" value="1"/>
</dbReference>
<dbReference type="HAMAP" id="MF_01543">
    <property type="entry name" value="FTHFS"/>
    <property type="match status" value="1"/>
</dbReference>
<dbReference type="InterPro" id="IPR000559">
    <property type="entry name" value="Formate_THF_ligase"/>
</dbReference>
<dbReference type="InterPro" id="IPR020628">
    <property type="entry name" value="Formate_THF_ligase_CS"/>
</dbReference>
<dbReference type="InterPro" id="IPR027417">
    <property type="entry name" value="P-loop_NTPase"/>
</dbReference>
<dbReference type="NCBIfam" id="NF010030">
    <property type="entry name" value="PRK13505.1"/>
    <property type="match status" value="1"/>
</dbReference>
<dbReference type="Pfam" id="PF01268">
    <property type="entry name" value="FTHFS"/>
    <property type="match status" value="1"/>
</dbReference>
<dbReference type="SUPFAM" id="SSF52540">
    <property type="entry name" value="P-loop containing nucleoside triphosphate hydrolases"/>
    <property type="match status" value="1"/>
</dbReference>
<dbReference type="PROSITE" id="PS00721">
    <property type="entry name" value="FTHFS_1"/>
    <property type="match status" value="1"/>
</dbReference>
<dbReference type="PROSITE" id="PS00722">
    <property type="entry name" value="FTHFS_2"/>
    <property type="match status" value="1"/>
</dbReference>
<gene>
    <name evidence="1" type="primary">fhs</name>
    <name type="ordered locus">ZMO0454</name>
</gene>
<name>FTHS_ZYMMO</name>